<sequence length="249" mass="28225">MMKKMKWALVLALGLTGLNAFGQETPEVKIEKLKDNLYVYTTYNTFNGTKYAANAVYLVTSKGVVVIDSPWGEEKFKNFTDEIYKRHGKKVIMNIATHSHDDRAGGLEYFKSLGAKTYSTKMTDSILAKDNKPRAQYTFDNNKSFKVGKDEFQVYYPGKGHTADHVVVWFPKDKVLVGGCIIKSGDSKDLGFLGEAYVNDWTQSVHNIQKKFPNVQYVVAGHDDWKDQTAIQHTLDLISEYQQKQKASN</sequence>
<proteinExistence type="inferred from homology"/>
<feature type="signal peptide" evidence="1 2 5">
    <location>
        <begin position="1"/>
        <end position="22"/>
    </location>
</feature>
<feature type="chain" id="PRO_0000016952" description="Metallo-beta-lactamase type 2">
    <location>
        <begin position="23"/>
        <end position="249"/>
    </location>
</feature>
<feature type="binding site" evidence="1">
    <location>
        <position position="98"/>
    </location>
    <ligand>
        <name>Zn(2+)</name>
        <dbReference type="ChEBI" id="CHEBI:29105"/>
        <label>1</label>
    </ligand>
</feature>
<feature type="binding site" evidence="1">
    <location>
        <position position="100"/>
    </location>
    <ligand>
        <name>Zn(2+)</name>
        <dbReference type="ChEBI" id="CHEBI:29105"/>
        <label>1</label>
    </ligand>
</feature>
<feature type="binding site" evidence="1">
    <location>
        <position position="102"/>
    </location>
    <ligand>
        <name>Zn(2+)</name>
        <dbReference type="ChEBI" id="CHEBI:29105"/>
        <label>2</label>
    </ligand>
</feature>
<feature type="binding site" evidence="1">
    <location>
        <position position="161"/>
    </location>
    <ligand>
        <name>Zn(2+)</name>
        <dbReference type="ChEBI" id="CHEBI:29105"/>
        <label>1</label>
    </ligand>
</feature>
<feature type="binding site" evidence="1">
    <location>
        <position position="180"/>
    </location>
    <ligand>
        <name>Zn(2+)</name>
        <dbReference type="ChEBI" id="CHEBI:29105"/>
        <label>2</label>
    </ligand>
</feature>
<feature type="binding site" evidence="1">
    <location>
        <position position="183"/>
    </location>
    <ligand>
        <name>substrate</name>
    </ligand>
</feature>
<feature type="binding site" evidence="1">
    <location>
        <position position="222"/>
    </location>
    <ligand>
        <name>Zn(2+)</name>
        <dbReference type="ChEBI" id="CHEBI:29105"/>
        <label>2</label>
    </ligand>
</feature>
<protein>
    <recommendedName>
        <fullName evidence="4">Metallo-beta-lactamase type 2</fullName>
        <ecNumber evidence="1">3.5.2.6</ecNumber>
    </recommendedName>
    <alternativeName>
        <fullName evidence="1">B2 metallo-beta-lactamase</fullName>
    </alternativeName>
    <alternativeName>
        <fullName evidence="1">Beta-lactamase type II</fullName>
    </alternativeName>
    <alternativeName>
        <fullName evidence="1">Carbapenem-hydrolyzing beta-lactamase BlaB-4</fullName>
        <shortName evidence="1">CHbetaL-4</shortName>
    </alternativeName>
    <alternativeName>
        <fullName evidence="1">Class B carbapenemase BlaB-4</fullName>
    </alternativeName>
    <alternativeName>
        <fullName evidence="3">Metallo lactamase BlaB-3</fullName>
    </alternativeName>
    <alternativeName>
        <fullName evidence="1">Metallo-beta-lactamase type II</fullName>
    </alternativeName>
</protein>
<accession>Q9XBN7</accession>
<organism>
    <name type="scientific">Elizabethkingia meningoseptica</name>
    <name type="common">Chryseobacterium meningosepticum</name>
    <dbReference type="NCBI Taxonomy" id="238"/>
    <lineage>
        <taxon>Bacteria</taxon>
        <taxon>Pseudomonadati</taxon>
        <taxon>Bacteroidota</taxon>
        <taxon>Flavobacteriia</taxon>
        <taxon>Flavobacteriales</taxon>
        <taxon>Weeksellaceae</taxon>
        <taxon>Elizabethkingia</taxon>
    </lineage>
</organism>
<name>BLAB4_ELIME</name>
<comment type="function">
    <text evidence="1">Confers resistance to the different beta-lactams antibiotics (penicillin, cephalosporin and carbapenem) via the hydrolysis of the beta-lactam ring.</text>
</comment>
<comment type="catalytic activity">
    <reaction evidence="1">
        <text>a beta-lactam + H2O = a substituted beta-amino acid</text>
        <dbReference type="Rhea" id="RHEA:20401"/>
        <dbReference type="ChEBI" id="CHEBI:15377"/>
        <dbReference type="ChEBI" id="CHEBI:35627"/>
        <dbReference type="ChEBI" id="CHEBI:140347"/>
        <dbReference type="EC" id="3.5.2.6"/>
    </reaction>
</comment>
<comment type="cofactor">
    <cofactor evidence="1">
        <name>Zn(2+)</name>
        <dbReference type="ChEBI" id="CHEBI:29105"/>
    </cofactor>
    <text evidence="1">Binds 2 Zn(2+) ions per subunit.</text>
</comment>
<comment type="subunit">
    <text evidence="1">Monomer.</text>
</comment>
<comment type="subcellular location">
    <subcellularLocation>
        <location evidence="4">Periplasm</location>
    </subcellularLocation>
</comment>
<comment type="similarity">
    <text evidence="4">Belongs to the metallo-beta-lactamase superfamily. Class-B beta-lactamase family.</text>
</comment>
<evidence type="ECO:0000250" key="1">
    <source>
        <dbReference type="UniProtKB" id="O08498"/>
    </source>
</evidence>
<evidence type="ECO:0000255" key="2"/>
<evidence type="ECO:0000303" key="3">
    <source>
    </source>
</evidence>
<evidence type="ECO:0000305" key="4"/>
<evidence type="ECO:0000305" key="5">
    <source>
    </source>
</evidence>
<keyword id="KW-0046">Antibiotic resistance</keyword>
<keyword id="KW-0378">Hydrolase</keyword>
<keyword id="KW-0479">Metal-binding</keyword>
<keyword id="KW-0574">Periplasm</keyword>
<keyword id="KW-0732">Signal</keyword>
<keyword id="KW-0862">Zinc</keyword>
<gene>
    <name type="primary">blaB4</name>
    <name evidence="1" type="synonym">blaB</name>
    <name evidence="3" type="synonym">blaB3</name>
</gene>
<reference key="1">
    <citation type="journal article" date="2000" name="Antimicrob. Agents Chemother.">
        <title>Carbapenemases of chryseobacterium (Flavobacterium) meningosepticum: distribution of blaB and characterization of a novel metallo-beta-lactamase gene, blaB3, in the type strain, NCTC 10016.</title>
        <authorList>
            <person name="Woodford N."/>
            <person name="Palepou M.-F.I."/>
            <person name="Babini G.S."/>
            <person name="Holmes B."/>
            <person name="Livermore D.M."/>
        </authorList>
    </citation>
    <scope>NUCLEOTIDE SEQUENCE [GENOMIC DNA]</scope>
    <source>
        <strain>ATCC 13253 / DSM 2800 / CCUG 214 / CIP 60.57 / LMG 12279 / NBRC 12535 / NCTC 100 / 1416</strain>
    </source>
</reference>
<reference key="2">
    <citation type="journal article" date="2000" name="Antimicrob. Agents Chemother.">
        <title>Molecular and biochemical heterogeneity of class B carbapenem-hydrolyzing beta-lactamases in Chryseobacterium meningosepticum.</title>
        <authorList>
            <person name="Bellais S."/>
            <person name="Aubert D."/>
            <person name="Naas T."/>
            <person name="Nordmann P."/>
        </authorList>
    </citation>
    <scope>NUCLEOTIDE SEQUENCE [GENOMIC DNA]</scope>
    <source>
        <strain>ATCC 13253 / DSM 2800 / CCUG 214 / CIP 60.57 / LMG 12279 / NBRC 12535 / NCTC 100 / 1416</strain>
    </source>
</reference>
<dbReference type="EC" id="3.5.2.6" evidence="1"/>
<dbReference type="EMBL" id="AF162284">
    <property type="protein sequence ID" value="AAD43582.1"/>
    <property type="molecule type" value="Genomic_DNA"/>
</dbReference>
<dbReference type="RefSeq" id="WP_063857827.1">
    <property type="nucleotide sequence ID" value="NG_048698.1"/>
</dbReference>
<dbReference type="SMR" id="Q9XBN7"/>
<dbReference type="STRING" id="238.BBD35_11100"/>
<dbReference type="CARD" id="ARO:3005543">
    <property type="molecule name" value="BlaB-3"/>
    <property type="mechanism identifier" value="ARO:0001004"/>
    <property type="mechanism name" value="antibiotic inactivation"/>
</dbReference>
<dbReference type="KEGG" id="ag:AAD43582"/>
<dbReference type="eggNOG" id="COG0491">
    <property type="taxonomic scope" value="Bacteria"/>
</dbReference>
<dbReference type="GO" id="GO:0042597">
    <property type="term" value="C:periplasmic space"/>
    <property type="evidence" value="ECO:0007669"/>
    <property type="project" value="UniProtKB-SubCell"/>
</dbReference>
<dbReference type="GO" id="GO:0008800">
    <property type="term" value="F:beta-lactamase activity"/>
    <property type="evidence" value="ECO:0007669"/>
    <property type="project" value="UniProtKB-EC"/>
</dbReference>
<dbReference type="GO" id="GO:0008270">
    <property type="term" value="F:zinc ion binding"/>
    <property type="evidence" value="ECO:0007669"/>
    <property type="project" value="InterPro"/>
</dbReference>
<dbReference type="GO" id="GO:0017001">
    <property type="term" value="P:antibiotic catabolic process"/>
    <property type="evidence" value="ECO:0007669"/>
    <property type="project" value="InterPro"/>
</dbReference>
<dbReference type="GO" id="GO:0046677">
    <property type="term" value="P:response to antibiotic"/>
    <property type="evidence" value="ECO:0007669"/>
    <property type="project" value="UniProtKB-KW"/>
</dbReference>
<dbReference type="CDD" id="cd16316">
    <property type="entry name" value="BlaB-like_MBL-B1"/>
    <property type="match status" value="1"/>
</dbReference>
<dbReference type="Gene3D" id="3.60.15.10">
    <property type="entry name" value="Ribonuclease Z/Hydroxyacylglutathione hydrolase-like"/>
    <property type="match status" value="1"/>
</dbReference>
<dbReference type="InterPro" id="IPR001018">
    <property type="entry name" value="Beta-lactamase_class-B_CS"/>
</dbReference>
<dbReference type="InterPro" id="IPR001279">
    <property type="entry name" value="Metallo-B-lactamas"/>
</dbReference>
<dbReference type="InterPro" id="IPR050855">
    <property type="entry name" value="NDM-1-like"/>
</dbReference>
<dbReference type="InterPro" id="IPR036866">
    <property type="entry name" value="RibonucZ/Hydroxyglut_hydro"/>
</dbReference>
<dbReference type="NCBIfam" id="NF012229">
    <property type="entry name" value="bla_class_B_core"/>
    <property type="match status" value="1"/>
</dbReference>
<dbReference type="NCBIfam" id="NF033088">
    <property type="entry name" value="bla_subclass_B1"/>
    <property type="match status" value="1"/>
</dbReference>
<dbReference type="NCBIfam" id="NF033107">
    <property type="entry name" value="blaB"/>
    <property type="match status" value="1"/>
</dbReference>
<dbReference type="NCBIfam" id="NF012146">
    <property type="entry name" value="blaB-IND-MUS"/>
    <property type="match status" value="1"/>
</dbReference>
<dbReference type="PANTHER" id="PTHR42951:SF4">
    <property type="entry name" value="ACYL-COENZYME A THIOESTERASE MBLAC2"/>
    <property type="match status" value="1"/>
</dbReference>
<dbReference type="PANTHER" id="PTHR42951">
    <property type="entry name" value="METALLO-BETA-LACTAMASE DOMAIN-CONTAINING"/>
    <property type="match status" value="1"/>
</dbReference>
<dbReference type="Pfam" id="PF00753">
    <property type="entry name" value="Lactamase_B"/>
    <property type="match status" value="1"/>
</dbReference>
<dbReference type="SMART" id="SM00849">
    <property type="entry name" value="Lactamase_B"/>
    <property type="match status" value="1"/>
</dbReference>
<dbReference type="SUPFAM" id="SSF56281">
    <property type="entry name" value="Metallo-hydrolase/oxidoreductase"/>
    <property type="match status" value="1"/>
</dbReference>
<dbReference type="PROSITE" id="PS00743">
    <property type="entry name" value="BETA_LACTAMASE_B_1"/>
    <property type="match status" value="1"/>
</dbReference>
<dbReference type="PROSITE" id="PS00744">
    <property type="entry name" value="BETA_LACTAMASE_B_2"/>
    <property type="match status" value="1"/>
</dbReference>